<accession>Q49YN8</accession>
<comment type="similarity">
    <text evidence="1">Belongs to the UPF0342 family.</text>
</comment>
<gene>
    <name type="ordered locus">SSP0954</name>
</gene>
<keyword id="KW-1185">Reference proteome</keyword>
<reference key="1">
    <citation type="journal article" date="2005" name="Proc. Natl. Acad. Sci. U.S.A.">
        <title>Whole genome sequence of Staphylococcus saprophyticus reveals the pathogenesis of uncomplicated urinary tract infection.</title>
        <authorList>
            <person name="Kuroda M."/>
            <person name="Yamashita A."/>
            <person name="Hirakawa H."/>
            <person name="Kumano M."/>
            <person name="Morikawa K."/>
            <person name="Higashide M."/>
            <person name="Maruyama A."/>
            <person name="Inose Y."/>
            <person name="Matoba K."/>
            <person name="Toh H."/>
            <person name="Kuhara S."/>
            <person name="Hattori M."/>
            <person name="Ohta T."/>
        </authorList>
    </citation>
    <scope>NUCLEOTIDE SEQUENCE [LARGE SCALE GENOMIC DNA]</scope>
    <source>
        <strain>ATCC 15305 / DSM 20229 / NCIMB 8711 / NCTC 7292 / S-41</strain>
    </source>
</reference>
<name>Y954_STAS1</name>
<protein>
    <recommendedName>
        <fullName evidence="1">UPF0342 protein SSP0954</fullName>
    </recommendedName>
</protein>
<dbReference type="EMBL" id="AP008934">
    <property type="protein sequence ID" value="BAE18099.1"/>
    <property type="molecule type" value="Genomic_DNA"/>
</dbReference>
<dbReference type="RefSeq" id="WP_002482889.1">
    <property type="nucleotide sequence ID" value="NZ_MTGA01000033.1"/>
</dbReference>
<dbReference type="SMR" id="Q49YN8"/>
<dbReference type="KEGG" id="ssp:SSP0954"/>
<dbReference type="eggNOG" id="COG3679">
    <property type="taxonomic scope" value="Bacteria"/>
</dbReference>
<dbReference type="HOGENOM" id="CLU_140243_3_0_9"/>
<dbReference type="OrthoDB" id="9811402at2"/>
<dbReference type="Proteomes" id="UP000006371">
    <property type="component" value="Chromosome"/>
</dbReference>
<dbReference type="Gene3D" id="1.20.1500.10">
    <property type="entry name" value="YheA/YmcA-like"/>
    <property type="match status" value="1"/>
</dbReference>
<dbReference type="HAMAP" id="MF_01526">
    <property type="entry name" value="UPF0342"/>
    <property type="match status" value="1"/>
</dbReference>
<dbReference type="InterPro" id="IPR010368">
    <property type="entry name" value="Com_YlbF"/>
</dbReference>
<dbReference type="InterPro" id="IPR023378">
    <property type="entry name" value="YheA/YmcA-like_dom_sf"/>
</dbReference>
<dbReference type="NCBIfam" id="NF010212">
    <property type="entry name" value="PRK13676.1-5"/>
    <property type="match status" value="1"/>
</dbReference>
<dbReference type="Pfam" id="PF06133">
    <property type="entry name" value="Com_YlbF"/>
    <property type="match status" value="1"/>
</dbReference>
<dbReference type="SUPFAM" id="SSF158622">
    <property type="entry name" value="YheA/YmcA-like"/>
    <property type="match status" value="1"/>
</dbReference>
<feature type="chain" id="PRO_0000292744" description="UPF0342 protein SSP0954">
    <location>
        <begin position="1"/>
        <end position="114"/>
    </location>
</feature>
<proteinExistence type="inferred from homology"/>
<organism>
    <name type="scientific">Staphylococcus saprophyticus subsp. saprophyticus (strain ATCC 15305 / DSM 20229 / NCIMB 8711 / NCTC 7292 / S-41)</name>
    <dbReference type="NCBI Taxonomy" id="342451"/>
    <lineage>
        <taxon>Bacteria</taxon>
        <taxon>Bacillati</taxon>
        <taxon>Bacillota</taxon>
        <taxon>Bacilli</taxon>
        <taxon>Bacillales</taxon>
        <taxon>Staphylococcaceae</taxon>
        <taxon>Staphylococcus</taxon>
    </lineage>
</organism>
<evidence type="ECO:0000255" key="1">
    <source>
        <dbReference type="HAMAP-Rule" id="MF_01526"/>
    </source>
</evidence>
<sequence>MAVNLYDHANQLEQALRESDEYQAIQNAYAKVKENQESKDLFDEFRETQLSFQQKQMQGEEIGEEELQKAQEQAQKIENDSNISELMAAEQNMSQVFQEINQIIVKPLDEIYAD</sequence>